<accession>Q630B8</accession>
<organism>
    <name type="scientific">Bacillus cereus (strain ZK / E33L)</name>
    <dbReference type="NCBI Taxonomy" id="288681"/>
    <lineage>
        <taxon>Bacteria</taxon>
        <taxon>Bacillati</taxon>
        <taxon>Bacillota</taxon>
        <taxon>Bacilli</taxon>
        <taxon>Bacillales</taxon>
        <taxon>Bacillaceae</taxon>
        <taxon>Bacillus</taxon>
        <taxon>Bacillus cereus group</taxon>
    </lineage>
</organism>
<gene>
    <name evidence="1" type="primary">mnmE</name>
    <name evidence="1" type="synonym">trmE</name>
    <name type="ordered locus">BCE33L5181</name>
</gene>
<dbReference type="EC" id="3.6.-.-" evidence="1"/>
<dbReference type="EMBL" id="CP000001">
    <property type="protein sequence ID" value="AAU20311.1"/>
    <property type="molecule type" value="Genomic_DNA"/>
</dbReference>
<dbReference type="RefSeq" id="WP_000393776.1">
    <property type="nucleotide sequence ID" value="NZ_CP009968.1"/>
</dbReference>
<dbReference type="SMR" id="Q630B8"/>
<dbReference type="KEGG" id="bcz:BCE33L5181"/>
<dbReference type="PATRIC" id="fig|288681.22.peg.160"/>
<dbReference type="Proteomes" id="UP000002612">
    <property type="component" value="Chromosome"/>
</dbReference>
<dbReference type="GO" id="GO:0005829">
    <property type="term" value="C:cytosol"/>
    <property type="evidence" value="ECO:0007669"/>
    <property type="project" value="TreeGrafter"/>
</dbReference>
<dbReference type="GO" id="GO:0005525">
    <property type="term" value="F:GTP binding"/>
    <property type="evidence" value="ECO:0007669"/>
    <property type="project" value="UniProtKB-UniRule"/>
</dbReference>
<dbReference type="GO" id="GO:0003924">
    <property type="term" value="F:GTPase activity"/>
    <property type="evidence" value="ECO:0007669"/>
    <property type="project" value="UniProtKB-UniRule"/>
</dbReference>
<dbReference type="GO" id="GO:0046872">
    <property type="term" value="F:metal ion binding"/>
    <property type="evidence" value="ECO:0007669"/>
    <property type="project" value="UniProtKB-KW"/>
</dbReference>
<dbReference type="GO" id="GO:0030488">
    <property type="term" value="P:tRNA methylation"/>
    <property type="evidence" value="ECO:0007669"/>
    <property type="project" value="TreeGrafter"/>
</dbReference>
<dbReference type="GO" id="GO:0002098">
    <property type="term" value="P:tRNA wobble uridine modification"/>
    <property type="evidence" value="ECO:0007669"/>
    <property type="project" value="TreeGrafter"/>
</dbReference>
<dbReference type="CDD" id="cd04164">
    <property type="entry name" value="trmE"/>
    <property type="match status" value="1"/>
</dbReference>
<dbReference type="CDD" id="cd14858">
    <property type="entry name" value="TrmE_N"/>
    <property type="match status" value="1"/>
</dbReference>
<dbReference type="FunFam" id="3.30.1360.120:FF:000003">
    <property type="entry name" value="tRNA modification GTPase MnmE"/>
    <property type="match status" value="1"/>
</dbReference>
<dbReference type="FunFam" id="3.40.50.300:FF:000494">
    <property type="entry name" value="tRNA modification GTPase MnmE"/>
    <property type="match status" value="1"/>
</dbReference>
<dbReference type="Gene3D" id="3.40.50.300">
    <property type="entry name" value="P-loop containing nucleotide triphosphate hydrolases"/>
    <property type="match status" value="1"/>
</dbReference>
<dbReference type="Gene3D" id="3.30.1360.120">
    <property type="entry name" value="Probable tRNA modification gtpase trme, domain 1"/>
    <property type="match status" value="1"/>
</dbReference>
<dbReference type="Gene3D" id="1.20.120.430">
    <property type="entry name" value="tRNA modification GTPase MnmE domain 2"/>
    <property type="match status" value="1"/>
</dbReference>
<dbReference type="HAMAP" id="MF_00379">
    <property type="entry name" value="GTPase_MnmE"/>
    <property type="match status" value="1"/>
</dbReference>
<dbReference type="InterPro" id="IPR031168">
    <property type="entry name" value="G_TrmE"/>
</dbReference>
<dbReference type="InterPro" id="IPR006073">
    <property type="entry name" value="GTP-bd"/>
</dbReference>
<dbReference type="InterPro" id="IPR018948">
    <property type="entry name" value="GTP-bd_TrmE_N"/>
</dbReference>
<dbReference type="InterPro" id="IPR004520">
    <property type="entry name" value="GTPase_MnmE"/>
</dbReference>
<dbReference type="InterPro" id="IPR027368">
    <property type="entry name" value="MnmE_dom2"/>
</dbReference>
<dbReference type="InterPro" id="IPR025867">
    <property type="entry name" value="MnmE_helical"/>
</dbReference>
<dbReference type="InterPro" id="IPR027417">
    <property type="entry name" value="P-loop_NTPase"/>
</dbReference>
<dbReference type="InterPro" id="IPR005225">
    <property type="entry name" value="Small_GTP-bd"/>
</dbReference>
<dbReference type="InterPro" id="IPR027266">
    <property type="entry name" value="TrmE/GcvT_dom1"/>
</dbReference>
<dbReference type="NCBIfam" id="TIGR00450">
    <property type="entry name" value="mnmE_trmE_thdF"/>
    <property type="match status" value="1"/>
</dbReference>
<dbReference type="NCBIfam" id="NF003661">
    <property type="entry name" value="PRK05291.1-3"/>
    <property type="match status" value="1"/>
</dbReference>
<dbReference type="NCBIfam" id="TIGR00231">
    <property type="entry name" value="small_GTP"/>
    <property type="match status" value="1"/>
</dbReference>
<dbReference type="PANTHER" id="PTHR42714">
    <property type="entry name" value="TRNA MODIFICATION GTPASE GTPBP3"/>
    <property type="match status" value="1"/>
</dbReference>
<dbReference type="PANTHER" id="PTHR42714:SF2">
    <property type="entry name" value="TRNA MODIFICATION GTPASE GTPBP3, MITOCHONDRIAL"/>
    <property type="match status" value="1"/>
</dbReference>
<dbReference type="Pfam" id="PF01926">
    <property type="entry name" value="MMR_HSR1"/>
    <property type="match status" value="1"/>
</dbReference>
<dbReference type="Pfam" id="PF12631">
    <property type="entry name" value="MnmE_helical"/>
    <property type="match status" value="1"/>
</dbReference>
<dbReference type="Pfam" id="PF10396">
    <property type="entry name" value="TrmE_N"/>
    <property type="match status" value="1"/>
</dbReference>
<dbReference type="SUPFAM" id="SSF52540">
    <property type="entry name" value="P-loop containing nucleoside triphosphate hydrolases"/>
    <property type="match status" value="1"/>
</dbReference>
<dbReference type="SUPFAM" id="SSF116878">
    <property type="entry name" value="TrmE connector domain"/>
    <property type="match status" value="1"/>
</dbReference>
<dbReference type="PROSITE" id="PS51709">
    <property type="entry name" value="G_TRME"/>
    <property type="match status" value="1"/>
</dbReference>
<name>MNME_BACCZ</name>
<comment type="function">
    <text evidence="1">Exhibits a very high intrinsic GTPase hydrolysis rate. Involved in the addition of a carboxymethylaminomethyl (cmnm) group at the wobble position (U34) of certain tRNAs, forming tRNA-cmnm(5)s(2)U34.</text>
</comment>
<comment type="cofactor">
    <cofactor evidence="1">
        <name>K(+)</name>
        <dbReference type="ChEBI" id="CHEBI:29103"/>
    </cofactor>
    <text evidence="1">Binds 1 potassium ion per subunit.</text>
</comment>
<comment type="subunit">
    <text evidence="1">Homodimer. Heterotetramer of two MnmE and two MnmG subunits.</text>
</comment>
<comment type="subcellular location">
    <subcellularLocation>
        <location evidence="1">Cytoplasm</location>
    </subcellularLocation>
</comment>
<comment type="similarity">
    <text evidence="1">Belongs to the TRAFAC class TrmE-Era-EngA-EngB-Septin-like GTPase superfamily. TrmE GTPase family.</text>
</comment>
<proteinExistence type="inferred from homology"/>
<evidence type="ECO:0000255" key="1">
    <source>
        <dbReference type="HAMAP-Rule" id="MF_00379"/>
    </source>
</evidence>
<sequence length="458" mass="50545">MEFDTIAAISTALGEGAIAIVRVSGDDAVEKVNRIFKGKDLTEVPSHTIHYGHIVDLDTNQVIEEVMVSIMRAPRTFTRENIVEINCHGGLVSVNKVLQLILAQGVRLAEPGEFTKRAFLNGRIDLSQAEAVMDLIRAKTDRAMNVAINQMEGRLSKLIGRLRQDILETLAHVEVNIDYPEYDDVEEMTHNILIEKATHVRAEIAKILETSKQGKILREGIATAIIGRPNVGKSSLLNSLVQEKKAIVTDIAGTTRDVIEEYVNVRGVPLKLIDTAGIRETEDVVERIGVERSKEMMSQADLVLVVVNYSEALTNEDEELFRAVQGKDFIVIVNKTDLPQAIDMERVIELAAGNRVITTSLIEEQGIDELEKAIADLFFEGTIDSADVTYVSNARHIGLLTQAGKTIGDAIEAIENGVPIDMVQIDLTRTWEILGEITGDTVHESLIDQLFSQFCLGK</sequence>
<protein>
    <recommendedName>
        <fullName evidence="1">tRNA modification GTPase MnmE</fullName>
        <ecNumber evidence="1">3.6.-.-</ecNumber>
    </recommendedName>
</protein>
<feature type="chain" id="PRO_1000048799" description="tRNA modification GTPase MnmE">
    <location>
        <begin position="1"/>
        <end position="458"/>
    </location>
</feature>
<feature type="domain" description="TrmE-type G">
    <location>
        <begin position="220"/>
        <end position="379"/>
    </location>
</feature>
<feature type="binding site" evidence="1">
    <location>
        <position position="22"/>
    </location>
    <ligand>
        <name>(6S)-5-formyl-5,6,7,8-tetrahydrofolate</name>
        <dbReference type="ChEBI" id="CHEBI:57457"/>
    </ligand>
</feature>
<feature type="binding site" evidence="1">
    <location>
        <position position="84"/>
    </location>
    <ligand>
        <name>(6S)-5-formyl-5,6,7,8-tetrahydrofolate</name>
        <dbReference type="ChEBI" id="CHEBI:57457"/>
    </ligand>
</feature>
<feature type="binding site" evidence="1">
    <location>
        <position position="123"/>
    </location>
    <ligand>
        <name>(6S)-5-formyl-5,6,7,8-tetrahydrofolate</name>
        <dbReference type="ChEBI" id="CHEBI:57457"/>
    </ligand>
</feature>
<feature type="binding site" evidence="1">
    <location>
        <begin position="230"/>
        <end position="235"/>
    </location>
    <ligand>
        <name>GTP</name>
        <dbReference type="ChEBI" id="CHEBI:37565"/>
    </ligand>
</feature>
<feature type="binding site" evidence="1">
    <location>
        <position position="230"/>
    </location>
    <ligand>
        <name>K(+)</name>
        <dbReference type="ChEBI" id="CHEBI:29103"/>
    </ligand>
</feature>
<feature type="binding site" evidence="1">
    <location>
        <position position="234"/>
    </location>
    <ligand>
        <name>Mg(2+)</name>
        <dbReference type="ChEBI" id="CHEBI:18420"/>
    </ligand>
</feature>
<feature type="binding site" evidence="1">
    <location>
        <begin position="249"/>
        <end position="255"/>
    </location>
    <ligand>
        <name>GTP</name>
        <dbReference type="ChEBI" id="CHEBI:37565"/>
    </ligand>
</feature>
<feature type="binding site" evidence="1">
    <location>
        <position position="249"/>
    </location>
    <ligand>
        <name>K(+)</name>
        <dbReference type="ChEBI" id="CHEBI:29103"/>
    </ligand>
</feature>
<feature type="binding site" evidence="1">
    <location>
        <position position="251"/>
    </location>
    <ligand>
        <name>K(+)</name>
        <dbReference type="ChEBI" id="CHEBI:29103"/>
    </ligand>
</feature>
<feature type="binding site" evidence="1">
    <location>
        <position position="254"/>
    </location>
    <ligand>
        <name>K(+)</name>
        <dbReference type="ChEBI" id="CHEBI:29103"/>
    </ligand>
</feature>
<feature type="binding site" evidence="1">
    <location>
        <position position="255"/>
    </location>
    <ligand>
        <name>Mg(2+)</name>
        <dbReference type="ChEBI" id="CHEBI:18420"/>
    </ligand>
</feature>
<feature type="binding site" evidence="1">
    <location>
        <begin position="274"/>
        <end position="277"/>
    </location>
    <ligand>
        <name>GTP</name>
        <dbReference type="ChEBI" id="CHEBI:37565"/>
    </ligand>
</feature>
<feature type="binding site" evidence="1">
    <location>
        <position position="458"/>
    </location>
    <ligand>
        <name>(6S)-5-formyl-5,6,7,8-tetrahydrofolate</name>
        <dbReference type="ChEBI" id="CHEBI:57457"/>
    </ligand>
</feature>
<reference key="1">
    <citation type="journal article" date="2006" name="J. Bacteriol.">
        <title>Pathogenomic sequence analysis of Bacillus cereus and Bacillus thuringiensis isolates closely related to Bacillus anthracis.</title>
        <authorList>
            <person name="Han C.S."/>
            <person name="Xie G."/>
            <person name="Challacombe J.F."/>
            <person name="Altherr M.R."/>
            <person name="Bhotika S.S."/>
            <person name="Bruce D."/>
            <person name="Campbell C.S."/>
            <person name="Campbell M.L."/>
            <person name="Chen J."/>
            <person name="Chertkov O."/>
            <person name="Cleland C."/>
            <person name="Dimitrijevic M."/>
            <person name="Doggett N.A."/>
            <person name="Fawcett J.J."/>
            <person name="Glavina T."/>
            <person name="Goodwin L.A."/>
            <person name="Hill K.K."/>
            <person name="Hitchcock P."/>
            <person name="Jackson P.J."/>
            <person name="Keim P."/>
            <person name="Kewalramani A.R."/>
            <person name="Longmire J."/>
            <person name="Lucas S."/>
            <person name="Malfatti S."/>
            <person name="McMurry K."/>
            <person name="Meincke L.J."/>
            <person name="Misra M."/>
            <person name="Moseman B.L."/>
            <person name="Mundt M."/>
            <person name="Munk A.C."/>
            <person name="Okinaka R.T."/>
            <person name="Parson-Quintana B."/>
            <person name="Reilly L.P."/>
            <person name="Richardson P."/>
            <person name="Robinson D.L."/>
            <person name="Rubin E."/>
            <person name="Saunders E."/>
            <person name="Tapia R."/>
            <person name="Tesmer J.G."/>
            <person name="Thayer N."/>
            <person name="Thompson L.S."/>
            <person name="Tice H."/>
            <person name="Ticknor L.O."/>
            <person name="Wills P.L."/>
            <person name="Brettin T.S."/>
            <person name="Gilna P."/>
        </authorList>
    </citation>
    <scope>NUCLEOTIDE SEQUENCE [LARGE SCALE GENOMIC DNA]</scope>
    <source>
        <strain>ZK / E33L</strain>
    </source>
</reference>
<keyword id="KW-0963">Cytoplasm</keyword>
<keyword id="KW-0342">GTP-binding</keyword>
<keyword id="KW-0378">Hydrolase</keyword>
<keyword id="KW-0460">Magnesium</keyword>
<keyword id="KW-0479">Metal-binding</keyword>
<keyword id="KW-0547">Nucleotide-binding</keyword>
<keyword id="KW-0630">Potassium</keyword>
<keyword id="KW-0819">tRNA processing</keyword>